<proteinExistence type="inferred from homology"/>
<gene>
    <name evidence="1" type="primary">atpG</name>
    <name type="ordered locus">CMM_1168</name>
</gene>
<dbReference type="EMBL" id="AM711867">
    <property type="protein sequence ID" value="CAN01212.1"/>
    <property type="molecule type" value="Genomic_DNA"/>
</dbReference>
<dbReference type="RefSeq" id="WP_012037854.1">
    <property type="nucleotide sequence ID" value="NC_009480.1"/>
</dbReference>
<dbReference type="SMR" id="A5CQ59"/>
<dbReference type="GeneID" id="92947138"/>
<dbReference type="KEGG" id="cmi:CMM_1168"/>
<dbReference type="eggNOG" id="COG0224">
    <property type="taxonomic scope" value="Bacteria"/>
</dbReference>
<dbReference type="HOGENOM" id="CLU_050669_0_0_11"/>
<dbReference type="OrthoDB" id="9812769at2"/>
<dbReference type="Proteomes" id="UP000001564">
    <property type="component" value="Chromosome"/>
</dbReference>
<dbReference type="GO" id="GO:0005886">
    <property type="term" value="C:plasma membrane"/>
    <property type="evidence" value="ECO:0007669"/>
    <property type="project" value="UniProtKB-SubCell"/>
</dbReference>
<dbReference type="GO" id="GO:0045259">
    <property type="term" value="C:proton-transporting ATP synthase complex"/>
    <property type="evidence" value="ECO:0007669"/>
    <property type="project" value="UniProtKB-KW"/>
</dbReference>
<dbReference type="GO" id="GO:0005524">
    <property type="term" value="F:ATP binding"/>
    <property type="evidence" value="ECO:0007669"/>
    <property type="project" value="UniProtKB-UniRule"/>
</dbReference>
<dbReference type="GO" id="GO:0046933">
    <property type="term" value="F:proton-transporting ATP synthase activity, rotational mechanism"/>
    <property type="evidence" value="ECO:0007669"/>
    <property type="project" value="UniProtKB-UniRule"/>
</dbReference>
<dbReference type="GO" id="GO:0042777">
    <property type="term" value="P:proton motive force-driven plasma membrane ATP synthesis"/>
    <property type="evidence" value="ECO:0007669"/>
    <property type="project" value="UniProtKB-UniRule"/>
</dbReference>
<dbReference type="CDD" id="cd12151">
    <property type="entry name" value="F1-ATPase_gamma"/>
    <property type="match status" value="1"/>
</dbReference>
<dbReference type="Gene3D" id="3.40.1380.10">
    <property type="match status" value="1"/>
</dbReference>
<dbReference type="Gene3D" id="1.10.287.80">
    <property type="entry name" value="ATP synthase, gamma subunit, helix hairpin domain"/>
    <property type="match status" value="1"/>
</dbReference>
<dbReference type="HAMAP" id="MF_00815">
    <property type="entry name" value="ATP_synth_gamma_bact"/>
    <property type="match status" value="1"/>
</dbReference>
<dbReference type="InterPro" id="IPR035968">
    <property type="entry name" value="ATP_synth_F1_ATPase_gsu"/>
</dbReference>
<dbReference type="InterPro" id="IPR000131">
    <property type="entry name" value="ATP_synth_F1_gsu"/>
</dbReference>
<dbReference type="NCBIfam" id="TIGR01146">
    <property type="entry name" value="ATPsyn_F1gamma"/>
    <property type="match status" value="1"/>
</dbReference>
<dbReference type="NCBIfam" id="NF004145">
    <property type="entry name" value="PRK05621.1-2"/>
    <property type="match status" value="1"/>
</dbReference>
<dbReference type="PANTHER" id="PTHR11693">
    <property type="entry name" value="ATP SYNTHASE GAMMA CHAIN"/>
    <property type="match status" value="1"/>
</dbReference>
<dbReference type="PANTHER" id="PTHR11693:SF22">
    <property type="entry name" value="ATP SYNTHASE SUBUNIT GAMMA, MITOCHONDRIAL"/>
    <property type="match status" value="1"/>
</dbReference>
<dbReference type="Pfam" id="PF00231">
    <property type="entry name" value="ATP-synt"/>
    <property type="match status" value="1"/>
</dbReference>
<dbReference type="PRINTS" id="PR00126">
    <property type="entry name" value="ATPASEGAMMA"/>
</dbReference>
<dbReference type="SUPFAM" id="SSF52943">
    <property type="entry name" value="ATP synthase (F1-ATPase), gamma subunit"/>
    <property type="match status" value="1"/>
</dbReference>
<sequence length="299" mass="32700">MGAQLRVYTQKIKSAQTTKKITRAMELISASRIQKAQQRMAASAPYSRAVTRAVSAVATFSNVDHILTTEPEKVERAAIVIFASDRGLAGAFSSSVLKESEQLAELLRSQGKDIVYYLVGRKAVGYFKFRKRSSERIWTGSTEKPEFETAKSIGDALVEKFVTPASEGGVDEIHIVFNRFVSIATQKPEVVRLLPLEVVEGVEAPGEGAVLPLYEFEPEVGDVLDALLPVYIESRIFNAMLQSAASEHAARQKAMKSASDNADKLVTTYTRLRNNARQTEITQQISEIVGGADALASSK</sequence>
<evidence type="ECO:0000255" key="1">
    <source>
        <dbReference type="HAMAP-Rule" id="MF_00815"/>
    </source>
</evidence>
<organism>
    <name type="scientific">Clavibacter michiganensis subsp. michiganensis (strain NCPPB 382)</name>
    <dbReference type="NCBI Taxonomy" id="443906"/>
    <lineage>
        <taxon>Bacteria</taxon>
        <taxon>Bacillati</taxon>
        <taxon>Actinomycetota</taxon>
        <taxon>Actinomycetes</taxon>
        <taxon>Micrococcales</taxon>
        <taxon>Microbacteriaceae</taxon>
        <taxon>Clavibacter</taxon>
    </lineage>
</organism>
<reference key="1">
    <citation type="journal article" date="2008" name="J. Bacteriol.">
        <title>The genome sequence of the tomato-pathogenic actinomycete Clavibacter michiganensis subsp. michiganensis NCPPB382 reveals a large island involved in pathogenicity.</title>
        <authorList>
            <person name="Gartemann K.-H."/>
            <person name="Abt B."/>
            <person name="Bekel T."/>
            <person name="Burger A."/>
            <person name="Engemann J."/>
            <person name="Fluegel M."/>
            <person name="Gaigalat L."/>
            <person name="Goesmann A."/>
            <person name="Graefen I."/>
            <person name="Kalinowski J."/>
            <person name="Kaup O."/>
            <person name="Kirchner O."/>
            <person name="Krause L."/>
            <person name="Linke B."/>
            <person name="McHardy A."/>
            <person name="Meyer F."/>
            <person name="Pohle S."/>
            <person name="Rueckert C."/>
            <person name="Schneiker S."/>
            <person name="Zellermann E.-M."/>
            <person name="Puehler A."/>
            <person name="Eichenlaub R."/>
            <person name="Kaiser O."/>
            <person name="Bartels D."/>
        </authorList>
    </citation>
    <scope>NUCLEOTIDE SEQUENCE [LARGE SCALE GENOMIC DNA]</scope>
    <source>
        <strain>NCPPB 382</strain>
    </source>
</reference>
<protein>
    <recommendedName>
        <fullName evidence="1">ATP synthase gamma chain</fullName>
    </recommendedName>
    <alternativeName>
        <fullName evidence="1">ATP synthase F1 sector gamma subunit</fullName>
    </alternativeName>
    <alternativeName>
        <fullName evidence="1">F-ATPase gamma subunit</fullName>
    </alternativeName>
</protein>
<comment type="function">
    <text evidence="1">Produces ATP from ADP in the presence of a proton gradient across the membrane. The gamma chain is believed to be important in regulating ATPase activity and the flow of protons through the CF(0) complex.</text>
</comment>
<comment type="subunit">
    <text evidence="1">F-type ATPases have 2 components, CF(1) - the catalytic core - and CF(0) - the membrane proton channel. CF(1) has five subunits: alpha(3), beta(3), gamma(1), delta(1), epsilon(1). CF(0) has three main subunits: a, b and c.</text>
</comment>
<comment type="subcellular location">
    <subcellularLocation>
        <location evidence="1">Cell membrane</location>
        <topology evidence="1">Peripheral membrane protein</topology>
    </subcellularLocation>
</comment>
<comment type="similarity">
    <text evidence="1">Belongs to the ATPase gamma chain family.</text>
</comment>
<keyword id="KW-0066">ATP synthesis</keyword>
<keyword id="KW-1003">Cell membrane</keyword>
<keyword id="KW-0139">CF(1)</keyword>
<keyword id="KW-0375">Hydrogen ion transport</keyword>
<keyword id="KW-0406">Ion transport</keyword>
<keyword id="KW-0472">Membrane</keyword>
<keyword id="KW-0813">Transport</keyword>
<feature type="chain" id="PRO_1000053190" description="ATP synthase gamma chain">
    <location>
        <begin position="1"/>
        <end position="299"/>
    </location>
</feature>
<name>ATPG_CLAM3</name>
<accession>A5CQ59</accession>